<keyword id="KW-0687">Ribonucleoprotein</keyword>
<keyword id="KW-0689">Ribosomal protein</keyword>
<keyword id="KW-0694">RNA-binding</keyword>
<keyword id="KW-0699">rRNA-binding</keyword>
<gene>
    <name evidence="1" type="primary">rpsR</name>
    <name type="ordered locus">TRQ2_0331</name>
</gene>
<name>RS18_THESQ</name>
<organism>
    <name type="scientific">Thermotoga sp. (strain RQ2)</name>
    <dbReference type="NCBI Taxonomy" id="126740"/>
    <lineage>
        <taxon>Bacteria</taxon>
        <taxon>Thermotogati</taxon>
        <taxon>Thermotogota</taxon>
        <taxon>Thermotogae</taxon>
        <taxon>Thermotogales</taxon>
        <taxon>Thermotogaceae</taxon>
        <taxon>Thermotoga</taxon>
    </lineage>
</organism>
<comment type="function">
    <text evidence="1">Binds as a heterodimer with protein bS6 to the central domain of the 16S rRNA, where it helps stabilize the platform of the 30S subunit.</text>
</comment>
<comment type="subunit">
    <text evidence="1">Part of the 30S ribosomal subunit. Forms a tight heterodimer with protein bS6.</text>
</comment>
<comment type="similarity">
    <text evidence="1">Belongs to the bacterial ribosomal protein bS18 family.</text>
</comment>
<evidence type="ECO:0000255" key="1">
    <source>
        <dbReference type="HAMAP-Rule" id="MF_00270"/>
    </source>
</evidence>
<evidence type="ECO:0000305" key="2"/>
<protein>
    <recommendedName>
        <fullName evidence="1">Small ribosomal subunit protein bS18</fullName>
    </recommendedName>
    <alternativeName>
        <fullName evidence="2">30S ribosomal protein S18</fullName>
    </alternativeName>
</protein>
<sequence>MAYRRRKKKVKKCRLCEMKLDYVDYKDTRLLSEFLTDKGKIIPKRLTGTCAKHQRMVKVAIKRARQMGLLPYLKI</sequence>
<reference key="1">
    <citation type="journal article" date="2011" name="J. Bacteriol.">
        <title>Genome sequence of Thermotoga sp. strain RQ2, a hyperthermophilic bacterium isolated from a geothermally heated region of the seafloor near Ribeira Quente, the Azores.</title>
        <authorList>
            <person name="Swithers K.S."/>
            <person name="DiPippo J.L."/>
            <person name="Bruce D.C."/>
            <person name="Detter C."/>
            <person name="Tapia R."/>
            <person name="Han S."/>
            <person name="Saunders E."/>
            <person name="Goodwin L.A."/>
            <person name="Han J."/>
            <person name="Woyke T."/>
            <person name="Pitluck S."/>
            <person name="Pennacchio L."/>
            <person name="Nolan M."/>
            <person name="Mikhailova N."/>
            <person name="Lykidis A."/>
            <person name="Land M.L."/>
            <person name="Brettin T."/>
            <person name="Stetter K.O."/>
            <person name="Nelson K.E."/>
            <person name="Gogarten J.P."/>
            <person name="Noll K.M."/>
        </authorList>
    </citation>
    <scope>NUCLEOTIDE SEQUENCE [LARGE SCALE GENOMIC DNA]</scope>
    <source>
        <strain>RQ2</strain>
    </source>
</reference>
<dbReference type="EMBL" id="CP000969">
    <property type="protein sequence ID" value="ACB08687.1"/>
    <property type="molecule type" value="Genomic_DNA"/>
</dbReference>
<dbReference type="RefSeq" id="WP_012310475.1">
    <property type="nucleotide sequence ID" value="NC_010483.1"/>
</dbReference>
<dbReference type="SMR" id="B1L8K5"/>
<dbReference type="KEGG" id="trq:TRQ2_0331"/>
<dbReference type="HOGENOM" id="CLU_148710_2_2_0"/>
<dbReference type="Proteomes" id="UP000001687">
    <property type="component" value="Chromosome"/>
</dbReference>
<dbReference type="GO" id="GO:0022627">
    <property type="term" value="C:cytosolic small ribosomal subunit"/>
    <property type="evidence" value="ECO:0007669"/>
    <property type="project" value="TreeGrafter"/>
</dbReference>
<dbReference type="GO" id="GO:0070181">
    <property type="term" value="F:small ribosomal subunit rRNA binding"/>
    <property type="evidence" value="ECO:0007669"/>
    <property type="project" value="TreeGrafter"/>
</dbReference>
<dbReference type="GO" id="GO:0003735">
    <property type="term" value="F:structural constituent of ribosome"/>
    <property type="evidence" value="ECO:0007669"/>
    <property type="project" value="InterPro"/>
</dbReference>
<dbReference type="GO" id="GO:0006412">
    <property type="term" value="P:translation"/>
    <property type="evidence" value="ECO:0007669"/>
    <property type="project" value="UniProtKB-UniRule"/>
</dbReference>
<dbReference type="Gene3D" id="4.10.640.10">
    <property type="entry name" value="Ribosomal protein S18"/>
    <property type="match status" value="1"/>
</dbReference>
<dbReference type="HAMAP" id="MF_00270">
    <property type="entry name" value="Ribosomal_bS18"/>
    <property type="match status" value="1"/>
</dbReference>
<dbReference type="InterPro" id="IPR001648">
    <property type="entry name" value="Ribosomal_bS18"/>
</dbReference>
<dbReference type="InterPro" id="IPR018275">
    <property type="entry name" value="Ribosomal_bS18_CS"/>
</dbReference>
<dbReference type="InterPro" id="IPR036870">
    <property type="entry name" value="Ribosomal_bS18_sf"/>
</dbReference>
<dbReference type="NCBIfam" id="TIGR00165">
    <property type="entry name" value="S18"/>
    <property type="match status" value="1"/>
</dbReference>
<dbReference type="PANTHER" id="PTHR13479">
    <property type="entry name" value="30S RIBOSOMAL PROTEIN S18"/>
    <property type="match status" value="1"/>
</dbReference>
<dbReference type="PANTHER" id="PTHR13479:SF40">
    <property type="entry name" value="SMALL RIBOSOMAL SUBUNIT PROTEIN BS18M"/>
    <property type="match status" value="1"/>
</dbReference>
<dbReference type="Pfam" id="PF01084">
    <property type="entry name" value="Ribosomal_S18"/>
    <property type="match status" value="1"/>
</dbReference>
<dbReference type="PRINTS" id="PR00974">
    <property type="entry name" value="RIBOSOMALS18"/>
</dbReference>
<dbReference type="SUPFAM" id="SSF46911">
    <property type="entry name" value="Ribosomal protein S18"/>
    <property type="match status" value="1"/>
</dbReference>
<dbReference type="PROSITE" id="PS00057">
    <property type="entry name" value="RIBOSOMAL_S18"/>
    <property type="match status" value="1"/>
</dbReference>
<proteinExistence type="inferred from homology"/>
<accession>B1L8K5</accession>
<feature type="chain" id="PRO_1000114462" description="Small ribosomal subunit protein bS18">
    <location>
        <begin position="1"/>
        <end position="75"/>
    </location>
</feature>